<comment type="function">
    <text evidence="1">Catalyzes the attachment of threonine to tRNA(Thr) in a two-step reaction: L-threonine is first activated by ATP to form Thr-AMP and then transferred to the acceptor end of tRNA(Thr). Also edits incorrectly charged L-seryl-tRNA(Thr).</text>
</comment>
<comment type="catalytic activity">
    <reaction evidence="1">
        <text>tRNA(Thr) + L-threonine + ATP = L-threonyl-tRNA(Thr) + AMP + diphosphate + H(+)</text>
        <dbReference type="Rhea" id="RHEA:24624"/>
        <dbReference type="Rhea" id="RHEA-COMP:9670"/>
        <dbReference type="Rhea" id="RHEA-COMP:9704"/>
        <dbReference type="ChEBI" id="CHEBI:15378"/>
        <dbReference type="ChEBI" id="CHEBI:30616"/>
        <dbReference type="ChEBI" id="CHEBI:33019"/>
        <dbReference type="ChEBI" id="CHEBI:57926"/>
        <dbReference type="ChEBI" id="CHEBI:78442"/>
        <dbReference type="ChEBI" id="CHEBI:78534"/>
        <dbReference type="ChEBI" id="CHEBI:456215"/>
        <dbReference type="EC" id="6.1.1.3"/>
    </reaction>
</comment>
<comment type="cofactor">
    <cofactor evidence="1">
        <name>Zn(2+)</name>
        <dbReference type="ChEBI" id="CHEBI:29105"/>
    </cofactor>
    <text evidence="1">Binds 1 zinc ion per subunit.</text>
</comment>
<comment type="subunit">
    <text evidence="1">Homodimer.</text>
</comment>
<comment type="subcellular location">
    <subcellularLocation>
        <location evidence="1">Cytoplasm</location>
    </subcellularLocation>
</comment>
<comment type="similarity">
    <text evidence="1">Belongs to the class-II aminoacyl-tRNA synthetase family.</text>
</comment>
<sequence>MPVITLPDGSKREFANPVSTLDVAADIGPGLAKACIAGRVNGELKDACDIIDTDSELSIITAKDEEGVEILRHSCAHLLGHAFKQLWPEAKMAIGPVIDNGFYYDIDLDHKLTQEDIDALQKRMTQLAKTNYKVEKRVGSWQVARDTFEARGETYKMEVLDENISKDDQPALYHHEEYVDMCRGPHVPNMKFCQNFKLMSVAGAYWRGNSDNKMLQRVYGTAWADKKALKVHLNRLEEAAKRDHRKIGKQLDLYHMQEEAPGMVFWHNDGWSLFLELEKFIRQKLGQYTYQEVKGPLMMDRVLWERSGHWDKYADAMFTTNSENREYAIKPMNCPGHVQIFNQGLKSYRDLPLRMAEFGCCHRNEPSGSLHGLMRVRGFTQDDAHVFCTEDQVQQEVSACIKMVYDTYETFGFKDIVVKLSTRPEKRIGDDDMWDRSEEALKQALTANGIAYEILPGEGAFYGPKIEFTLHDCLDRAWQCGTVQLDYALPGRLGATYVAEDNSRQTPVMIHRAILGSLERFLGILIEEYAGKFPTWLAPMQVVVMNITDKQSDYVDEVVNIFKESGIRASKDLRNEKIGFKIREHTLRRVPYLLVVGDQEMDNKEVAVRTRDGVDLGKMRIEDFASKINEQISLRSLNLLED</sequence>
<dbReference type="EC" id="6.1.1.3" evidence="1"/>
<dbReference type="EMBL" id="CP000821">
    <property type="protein sequence ID" value="ABV36729.1"/>
    <property type="molecule type" value="Genomic_DNA"/>
</dbReference>
<dbReference type="RefSeq" id="WP_012142464.1">
    <property type="nucleotide sequence ID" value="NC_009831.1"/>
</dbReference>
<dbReference type="SMR" id="A8FV56"/>
<dbReference type="STRING" id="425104.Ssed_2120"/>
<dbReference type="KEGG" id="sse:Ssed_2120"/>
<dbReference type="eggNOG" id="COG0441">
    <property type="taxonomic scope" value="Bacteria"/>
</dbReference>
<dbReference type="HOGENOM" id="CLU_008554_0_1_6"/>
<dbReference type="OrthoDB" id="9802304at2"/>
<dbReference type="Proteomes" id="UP000002015">
    <property type="component" value="Chromosome"/>
</dbReference>
<dbReference type="GO" id="GO:0005829">
    <property type="term" value="C:cytosol"/>
    <property type="evidence" value="ECO:0007669"/>
    <property type="project" value="TreeGrafter"/>
</dbReference>
<dbReference type="GO" id="GO:0005524">
    <property type="term" value="F:ATP binding"/>
    <property type="evidence" value="ECO:0007669"/>
    <property type="project" value="UniProtKB-UniRule"/>
</dbReference>
<dbReference type="GO" id="GO:0046872">
    <property type="term" value="F:metal ion binding"/>
    <property type="evidence" value="ECO:0007669"/>
    <property type="project" value="UniProtKB-KW"/>
</dbReference>
<dbReference type="GO" id="GO:0004829">
    <property type="term" value="F:threonine-tRNA ligase activity"/>
    <property type="evidence" value="ECO:0007669"/>
    <property type="project" value="UniProtKB-UniRule"/>
</dbReference>
<dbReference type="GO" id="GO:0000049">
    <property type="term" value="F:tRNA binding"/>
    <property type="evidence" value="ECO:0007669"/>
    <property type="project" value="UniProtKB-KW"/>
</dbReference>
<dbReference type="GO" id="GO:0006435">
    <property type="term" value="P:threonyl-tRNA aminoacylation"/>
    <property type="evidence" value="ECO:0007669"/>
    <property type="project" value="UniProtKB-UniRule"/>
</dbReference>
<dbReference type="CDD" id="cd01667">
    <property type="entry name" value="TGS_ThrRS"/>
    <property type="match status" value="1"/>
</dbReference>
<dbReference type="CDD" id="cd00860">
    <property type="entry name" value="ThrRS_anticodon"/>
    <property type="match status" value="1"/>
</dbReference>
<dbReference type="CDD" id="cd00771">
    <property type="entry name" value="ThrRS_core"/>
    <property type="match status" value="1"/>
</dbReference>
<dbReference type="FunFam" id="3.10.20.30:FF:000005">
    <property type="entry name" value="Threonine--tRNA ligase"/>
    <property type="match status" value="1"/>
</dbReference>
<dbReference type="FunFam" id="3.30.54.20:FF:000002">
    <property type="entry name" value="Threonine--tRNA ligase"/>
    <property type="match status" value="1"/>
</dbReference>
<dbReference type="FunFam" id="3.30.930.10:FF:000002">
    <property type="entry name" value="Threonine--tRNA ligase"/>
    <property type="match status" value="1"/>
</dbReference>
<dbReference type="FunFam" id="3.40.50.800:FF:000001">
    <property type="entry name" value="Threonine--tRNA ligase"/>
    <property type="match status" value="1"/>
</dbReference>
<dbReference type="FunFam" id="3.30.980.10:FF:000005">
    <property type="entry name" value="Threonyl-tRNA synthetase, mitochondrial"/>
    <property type="match status" value="1"/>
</dbReference>
<dbReference type="Gene3D" id="3.10.20.30">
    <property type="match status" value="1"/>
</dbReference>
<dbReference type="Gene3D" id="3.30.54.20">
    <property type="match status" value="1"/>
</dbReference>
<dbReference type="Gene3D" id="3.40.50.800">
    <property type="entry name" value="Anticodon-binding domain"/>
    <property type="match status" value="1"/>
</dbReference>
<dbReference type="Gene3D" id="3.30.930.10">
    <property type="entry name" value="Bira Bifunctional Protein, Domain 2"/>
    <property type="match status" value="1"/>
</dbReference>
<dbReference type="Gene3D" id="3.30.980.10">
    <property type="entry name" value="Threonyl-trna Synthetase, Chain A, domain 2"/>
    <property type="match status" value="1"/>
</dbReference>
<dbReference type="HAMAP" id="MF_00184">
    <property type="entry name" value="Thr_tRNA_synth"/>
    <property type="match status" value="1"/>
</dbReference>
<dbReference type="InterPro" id="IPR002314">
    <property type="entry name" value="aa-tRNA-synt_IIb"/>
</dbReference>
<dbReference type="InterPro" id="IPR006195">
    <property type="entry name" value="aa-tRNA-synth_II"/>
</dbReference>
<dbReference type="InterPro" id="IPR045864">
    <property type="entry name" value="aa-tRNA-synth_II/BPL/LPL"/>
</dbReference>
<dbReference type="InterPro" id="IPR004154">
    <property type="entry name" value="Anticodon-bd"/>
</dbReference>
<dbReference type="InterPro" id="IPR036621">
    <property type="entry name" value="Anticodon-bd_dom_sf"/>
</dbReference>
<dbReference type="InterPro" id="IPR012675">
    <property type="entry name" value="Beta-grasp_dom_sf"/>
</dbReference>
<dbReference type="InterPro" id="IPR004095">
    <property type="entry name" value="TGS"/>
</dbReference>
<dbReference type="InterPro" id="IPR012676">
    <property type="entry name" value="TGS-like"/>
</dbReference>
<dbReference type="InterPro" id="IPR002320">
    <property type="entry name" value="Thr-tRNA-ligase_IIa"/>
</dbReference>
<dbReference type="InterPro" id="IPR018163">
    <property type="entry name" value="Thr/Ala-tRNA-synth_IIc_edit"/>
</dbReference>
<dbReference type="InterPro" id="IPR047246">
    <property type="entry name" value="ThrRS_anticodon"/>
</dbReference>
<dbReference type="InterPro" id="IPR033728">
    <property type="entry name" value="ThrRS_core"/>
</dbReference>
<dbReference type="InterPro" id="IPR012947">
    <property type="entry name" value="tRNA_SAD"/>
</dbReference>
<dbReference type="NCBIfam" id="TIGR00418">
    <property type="entry name" value="thrS"/>
    <property type="match status" value="1"/>
</dbReference>
<dbReference type="PANTHER" id="PTHR11451:SF44">
    <property type="entry name" value="THREONINE--TRNA LIGASE, CHLOROPLASTIC_MITOCHONDRIAL 2"/>
    <property type="match status" value="1"/>
</dbReference>
<dbReference type="PANTHER" id="PTHR11451">
    <property type="entry name" value="THREONINE-TRNA LIGASE"/>
    <property type="match status" value="1"/>
</dbReference>
<dbReference type="Pfam" id="PF03129">
    <property type="entry name" value="HGTP_anticodon"/>
    <property type="match status" value="1"/>
</dbReference>
<dbReference type="Pfam" id="PF02824">
    <property type="entry name" value="TGS"/>
    <property type="match status" value="1"/>
</dbReference>
<dbReference type="Pfam" id="PF00587">
    <property type="entry name" value="tRNA-synt_2b"/>
    <property type="match status" value="1"/>
</dbReference>
<dbReference type="Pfam" id="PF07973">
    <property type="entry name" value="tRNA_SAD"/>
    <property type="match status" value="1"/>
</dbReference>
<dbReference type="PRINTS" id="PR01047">
    <property type="entry name" value="TRNASYNTHTHR"/>
</dbReference>
<dbReference type="SMART" id="SM00863">
    <property type="entry name" value="tRNA_SAD"/>
    <property type="match status" value="1"/>
</dbReference>
<dbReference type="SUPFAM" id="SSF52954">
    <property type="entry name" value="Class II aaRS ABD-related"/>
    <property type="match status" value="1"/>
</dbReference>
<dbReference type="SUPFAM" id="SSF55681">
    <property type="entry name" value="Class II aaRS and biotin synthetases"/>
    <property type="match status" value="1"/>
</dbReference>
<dbReference type="SUPFAM" id="SSF81271">
    <property type="entry name" value="TGS-like"/>
    <property type="match status" value="1"/>
</dbReference>
<dbReference type="SUPFAM" id="SSF55186">
    <property type="entry name" value="ThrRS/AlaRS common domain"/>
    <property type="match status" value="1"/>
</dbReference>
<dbReference type="PROSITE" id="PS50862">
    <property type="entry name" value="AA_TRNA_LIGASE_II"/>
    <property type="match status" value="1"/>
</dbReference>
<dbReference type="PROSITE" id="PS51880">
    <property type="entry name" value="TGS"/>
    <property type="match status" value="1"/>
</dbReference>
<keyword id="KW-0030">Aminoacyl-tRNA synthetase</keyword>
<keyword id="KW-0067">ATP-binding</keyword>
<keyword id="KW-0963">Cytoplasm</keyword>
<keyword id="KW-0436">Ligase</keyword>
<keyword id="KW-0479">Metal-binding</keyword>
<keyword id="KW-0547">Nucleotide-binding</keyword>
<keyword id="KW-0648">Protein biosynthesis</keyword>
<keyword id="KW-1185">Reference proteome</keyword>
<keyword id="KW-0694">RNA-binding</keyword>
<keyword id="KW-0820">tRNA-binding</keyword>
<keyword id="KW-0862">Zinc</keyword>
<accession>A8FV56</accession>
<name>SYT_SHESH</name>
<reference key="1">
    <citation type="submission" date="2007-08" db="EMBL/GenBank/DDBJ databases">
        <title>Complete sequence of Shewanella sediminis HAW-EB3.</title>
        <authorList>
            <consortium name="US DOE Joint Genome Institute"/>
            <person name="Copeland A."/>
            <person name="Lucas S."/>
            <person name="Lapidus A."/>
            <person name="Barry K."/>
            <person name="Glavina del Rio T."/>
            <person name="Dalin E."/>
            <person name="Tice H."/>
            <person name="Pitluck S."/>
            <person name="Chertkov O."/>
            <person name="Brettin T."/>
            <person name="Bruce D."/>
            <person name="Detter J.C."/>
            <person name="Han C."/>
            <person name="Schmutz J."/>
            <person name="Larimer F."/>
            <person name="Land M."/>
            <person name="Hauser L."/>
            <person name="Kyrpides N."/>
            <person name="Kim E."/>
            <person name="Zhao J.-S."/>
            <person name="Richardson P."/>
        </authorList>
    </citation>
    <scope>NUCLEOTIDE SEQUENCE [LARGE SCALE GENOMIC DNA]</scope>
    <source>
        <strain>HAW-EB3</strain>
    </source>
</reference>
<evidence type="ECO:0000255" key="1">
    <source>
        <dbReference type="HAMAP-Rule" id="MF_00184"/>
    </source>
</evidence>
<evidence type="ECO:0000255" key="2">
    <source>
        <dbReference type="PROSITE-ProRule" id="PRU01228"/>
    </source>
</evidence>
<organism>
    <name type="scientific">Shewanella sediminis (strain HAW-EB3)</name>
    <dbReference type="NCBI Taxonomy" id="425104"/>
    <lineage>
        <taxon>Bacteria</taxon>
        <taxon>Pseudomonadati</taxon>
        <taxon>Pseudomonadota</taxon>
        <taxon>Gammaproteobacteria</taxon>
        <taxon>Alteromonadales</taxon>
        <taxon>Shewanellaceae</taxon>
        <taxon>Shewanella</taxon>
    </lineage>
</organism>
<proteinExistence type="inferred from homology"/>
<feature type="chain" id="PRO_1000077375" description="Threonine--tRNA ligase">
    <location>
        <begin position="1"/>
        <end position="642"/>
    </location>
</feature>
<feature type="domain" description="TGS" evidence="2">
    <location>
        <begin position="1"/>
        <end position="61"/>
    </location>
</feature>
<feature type="region of interest" description="Catalytic" evidence="1">
    <location>
        <begin position="243"/>
        <end position="534"/>
    </location>
</feature>
<feature type="binding site" evidence="1">
    <location>
        <position position="334"/>
    </location>
    <ligand>
        <name>Zn(2+)</name>
        <dbReference type="ChEBI" id="CHEBI:29105"/>
    </ligand>
</feature>
<feature type="binding site" evidence="1">
    <location>
        <position position="385"/>
    </location>
    <ligand>
        <name>Zn(2+)</name>
        <dbReference type="ChEBI" id="CHEBI:29105"/>
    </ligand>
</feature>
<feature type="binding site" evidence="1">
    <location>
        <position position="511"/>
    </location>
    <ligand>
        <name>Zn(2+)</name>
        <dbReference type="ChEBI" id="CHEBI:29105"/>
    </ligand>
</feature>
<gene>
    <name evidence="1" type="primary">thrS</name>
    <name type="ordered locus">Ssed_2120</name>
</gene>
<protein>
    <recommendedName>
        <fullName evidence="1">Threonine--tRNA ligase</fullName>
        <ecNumber evidence="1">6.1.1.3</ecNumber>
    </recommendedName>
    <alternativeName>
        <fullName evidence="1">Threonyl-tRNA synthetase</fullName>
        <shortName evidence="1">ThrRS</shortName>
    </alternativeName>
</protein>